<protein>
    <recommendedName>
        <fullName evidence="1">tRNA pseudouridine synthase A</fullName>
        <ecNumber evidence="1">5.4.99.12</ecNumber>
    </recommendedName>
    <alternativeName>
        <fullName evidence="1">tRNA pseudouridine(38-40) synthase</fullName>
    </alternativeName>
    <alternativeName>
        <fullName evidence="1">tRNA pseudouridylate synthase I</fullName>
    </alternativeName>
    <alternativeName>
        <fullName evidence="1">tRNA-uridine isomerase I</fullName>
    </alternativeName>
</protein>
<keyword id="KW-0413">Isomerase</keyword>
<keyword id="KW-0819">tRNA processing</keyword>
<name>TRUA_CAUSK</name>
<reference key="1">
    <citation type="submission" date="2008-01" db="EMBL/GenBank/DDBJ databases">
        <title>Complete sequence of chromosome of Caulobacter sp. K31.</title>
        <authorList>
            <consortium name="US DOE Joint Genome Institute"/>
            <person name="Copeland A."/>
            <person name="Lucas S."/>
            <person name="Lapidus A."/>
            <person name="Barry K."/>
            <person name="Glavina del Rio T."/>
            <person name="Dalin E."/>
            <person name="Tice H."/>
            <person name="Pitluck S."/>
            <person name="Bruce D."/>
            <person name="Goodwin L."/>
            <person name="Thompson L.S."/>
            <person name="Brettin T."/>
            <person name="Detter J.C."/>
            <person name="Han C."/>
            <person name="Schmutz J."/>
            <person name="Larimer F."/>
            <person name="Land M."/>
            <person name="Hauser L."/>
            <person name="Kyrpides N."/>
            <person name="Kim E."/>
            <person name="Stephens C."/>
            <person name="Richardson P."/>
        </authorList>
    </citation>
    <scope>NUCLEOTIDE SEQUENCE [LARGE SCALE GENOMIC DNA]</scope>
    <source>
        <strain>K31</strain>
    </source>
</reference>
<organism>
    <name type="scientific">Caulobacter sp. (strain K31)</name>
    <dbReference type="NCBI Taxonomy" id="366602"/>
    <lineage>
        <taxon>Bacteria</taxon>
        <taxon>Pseudomonadati</taxon>
        <taxon>Pseudomonadota</taxon>
        <taxon>Alphaproteobacteria</taxon>
        <taxon>Caulobacterales</taxon>
        <taxon>Caulobacteraceae</taxon>
        <taxon>Caulobacter</taxon>
    </lineage>
</organism>
<proteinExistence type="inferred from homology"/>
<gene>
    <name evidence="1" type="primary">truA</name>
    <name type="ordered locus">Caul_4567</name>
</gene>
<feature type="chain" id="PRO_1000077084" description="tRNA pseudouridine synthase A">
    <location>
        <begin position="1"/>
        <end position="249"/>
    </location>
</feature>
<feature type="active site" description="Nucleophile" evidence="1">
    <location>
        <position position="52"/>
    </location>
</feature>
<feature type="binding site" evidence="1">
    <location>
        <position position="111"/>
    </location>
    <ligand>
        <name>substrate</name>
    </ligand>
</feature>
<evidence type="ECO:0000255" key="1">
    <source>
        <dbReference type="HAMAP-Rule" id="MF_00171"/>
    </source>
</evidence>
<sequence>MPRYRLTIEYDGRPYNGFQAQASQPSVQGAIEAAVKAFTGQTIRIAAAGRTDTGVHATAQVVHVDLERDWPAETVMNALNAHLVREAISVLDAVVVSDDWHARFSANERRYLYRILNRRAPPALERGKVWHVKKPIDADAMQTAAQALVGLHDFTTFRDMACQAKSPLKTLDVARVSRVGDEVHLVFEARSFLHRQVRSMTGTLAEVGVGRWTADDVMAALEARDRTACGPVAPADGLYLTGVGYEGEG</sequence>
<accession>B0T1S6</accession>
<comment type="function">
    <text evidence="1">Formation of pseudouridine at positions 38, 39 and 40 in the anticodon stem and loop of transfer RNAs.</text>
</comment>
<comment type="catalytic activity">
    <reaction evidence="1">
        <text>uridine(38/39/40) in tRNA = pseudouridine(38/39/40) in tRNA</text>
        <dbReference type="Rhea" id="RHEA:22376"/>
        <dbReference type="Rhea" id="RHEA-COMP:10085"/>
        <dbReference type="Rhea" id="RHEA-COMP:10087"/>
        <dbReference type="ChEBI" id="CHEBI:65314"/>
        <dbReference type="ChEBI" id="CHEBI:65315"/>
        <dbReference type="EC" id="5.4.99.12"/>
    </reaction>
</comment>
<comment type="subunit">
    <text evidence="1">Homodimer.</text>
</comment>
<comment type="similarity">
    <text evidence="1">Belongs to the tRNA pseudouridine synthase TruA family.</text>
</comment>
<dbReference type="EC" id="5.4.99.12" evidence="1"/>
<dbReference type="EMBL" id="CP000927">
    <property type="protein sequence ID" value="ABZ73687.1"/>
    <property type="molecule type" value="Genomic_DNA"/>
</dbReference>
<dbReference type="SMR" id="B0T1S6"/>
<dbReference type="STRING" id="366602.Caul_4567"/>
<dbReference type="KEGG" id="cak:Caul_4567"/>
<dbReference type="eggNOG" id="COG0101">
    <property type="taxonomic scope" value="Bacteria"/>
</dbReference>
<dbReference type="HOGENOM" id="CLU_014673_0_2_5"/>
<dbReference type="OrthoDB" id="9811823at2"/>
<dbReference type="GO" id="GO:0003723">
    <property type="term" value="F:RNA binding"/>
    <property type="evidence" value="ECO:0007669"/>
    <property type="project" value="InterPro"/>
</dbReference>
<dbReference type="GO" id="GO:0160147">
    <property type="term" value="F:tRNA pseudouridine(38-40) synthase activity"/>
    <property type="evidence" value="ECO:0007669"/>
    <property type="project" value="UniProtKB-EC"/>
</dbReference>
<dbReference type="GO" id="GO:0031119">
    <property type="term" value="P:tRNA pseudouridine synthesis"/>
    <property type="evidence" value="ECO:0007669"/>
    <property type="project" value="UniProtKB-UniRule"/>
</dbReference>
<dbReference type="CDD" id="cd02570">
    <property type="entry name" value="PseudoU_synth_EcTruA"/>
    <property type="match status" value="1"/>
</dbReference>
<dbReference type="FunFam" id="3.30.70.580:FF:000001">
    <property type="entry name" value="tRNA pseudouridine synthase A"/>
    <property type="match status" value="1"/>
</dbReference>
<dbReference type="Gene3D" id="3.30.70.660">
    <property type="entry name" value="Pseudouridine synthase I, catalytic domain, C-terminal subdomain"/>
    <property type="match status" value="1"/>
</dbReference>
<dbReference type="Gene3D" id="3.30.70.580">
    <property type="entry name" value="Pseudouridine synthase I, catalytic domain, N-terminal subdomain"/>
    <property type="match status" value="1"/>
</dbReference>
<dbReference type="HAMAP" id="MF_00171">
    <property type="entry name" value="TruA"/>
    <property type="match status" value="1"/>
</dbReference>
<dbReference type="InterPro" id="IPR020103">
    <property type="entry name" value="PsdUridine_synth_cat_dom_sf"/>
</dbReference>
<dbReference type="InterPro" id="IPR001406">
    <property type="entry name" value="PsdUridine_synth_TruA"/>
</dbReference>
<dbReference type="InterPro" id="IPR020097">
    <property type="entry name" value="PsdUridine_synth_TruA_a/b_dom"/>
</dbReference>
<dbReference type="InterPro" id="IPR020095">
    <property type="entry name" value="PsdUridine_synth_TruA_C"/>
</dbReference>
<dbReference type="InterPro" id="IPR020094">
    <property type="entry name" value="TruA/RsuA/RluB/E/F_N"/>
</dbReference>
<dbReference type="NCBIfam" id="TIGR00071">
    <property type="entry name" value="hisT_truA"/>
    <property type="match status" value="1"/>
</dbReference>
<dbReference type="PANTHER" id="PTHR11142">
    <property type="entry name" value="PSEUDOURIDYLATE SYNTHASE"/>
    <property type="match status" value="1"/>
</dbReference>
<dbReference type="PANTHER" id="PTHR11142:SF0">
    <property type="entry name" value="TRNA PSEUDOURIDINE SYNTHASE-LIKE 1"/>
    <property type="match status" value="1"/>
</dbReference>
<dbReference type="Pfam" id="PF01416">
    <property type="entry name" value="PseudoU_synth_1"/>
    <property type="match status" value="2"/>
</dbReference>
<dbReference type="PIRSF" id="PIRSF001430">
    <property type="entry name" value="tRNA_psdUrid_synth"/>
    <property type="match status" value="1"/>
</dbReference>
<dbReference type="SUPFAM" id="SSF55120">
    <property type="entry name" value="Pseudouridine synthase"/>
    <property type="match status" value="1"/>
</dbReference>